<name>RS19_CHLTA</name>
<keyword id="KW-0687">Ribonucleoprotein</keyword>
<keyword id="KW-0689">Ribosomal protein</keyword>
<keyword id="KW-0694">RNA-binding</keyword>
<keyword id="KW-0699">rRNA-binding</keyword>
<dbReference type="EMBL" id="CP000051">
    <property type="protein sequence ID" value="AAX50799.1"/>
    <property type="molecule type" value="Genomic_DNA"/>
</dbReference>
<dbReference type="RefSeq" id="WP_009871888.1">
    <property type="nucleotide sequence ID" value="NC_007429.1"/>
</dbReference>
<dbReference type="SMR" id="Q3KLH3"/>
<dbReference type="GeneID" id="93065363"/>
<dbReference type="KEGG" id="cta:CTA_0573"/>
<dbReference type="HOGENOM" id="CLU_144911_0_1_0"/>
<dbReference type="Proteomes" id="UP000002532">
    <property type="component" value="Chromosome"/>
</dbReference>
<dbReference type="GO" id="GO:0005737">
    <property type="term" value="C:cytoplasm"/>
    <property type="evidence" value="ECO:0007669"/>
    <property type="project" value="UniProtKB-ARBA"/>
</dbReference>
<dbReference type="GO" id="GO:0015935">
    <property type="term" value="C:small ribosomal subunit"/>
    <property type="evidence" value="ECO:0007669"/>
    <property type="project" value="InterPro"/>
</dbReference>
<dbReference type="GO" id="GO:0019843">
    <property type="term" value="F:rRNA binding"/>
    <property type="evidence" value="ECO:0007669"/>
    <property type="project" value="UniProtKB-UniRule"/>
</dbReference>
<dbReference type="GO" id="GO:0003735">
    <property type="term" value="F:structural constituent of ribosome"/>
    <property type="evidence" value="ECO:0007669"/>
    <property type="project" value="InterPro"/>
</dbReference>
<dbReference type="GO" id="GO:0000028">
    <property type="term" value="P:ribosomal small subunit assembly"/>
    <property type="evidence" value="ECO:0007669"/>
    <property type="project" value="TreeGrafter"/>
</dbReference>
<dbReference type="GO" id="GO:0006412">
    <property type="term" value="P:translation"/>
    <property type="evidence" value="ECO:0007669"/>
    <property type="project" value="UniProtKB-UniRule"/>
</dbReference>
<dbReference type="FunFam" id="3.30.860.10:FF:000001">
    <property type="entry name" value="30S ribosomal protein S19"/>
    <property type="match status" value="1"/>
</dbReference>
<dbReference type="Gene3D" id="3.30.860.10">
    <property type="entry name" value="30s Ribosomal Protein S19, Chain A"/>
    <property type="match status" value="1"/>
</dbReference>
<dbReference type="HAMAP" id="MF_00531">
    <property type="entry name" value="Ribosomal_uS19"/>
    <property type="match status" value="1"/>
</dbReference>
<dbReference type="InterPro" id="IPR002222">
    <property type="entry name" value="Ribosomal_uS19"/>
</dbReference>
<dbReference type="InterPro" id="IPR005732">
    <property type="entry name" value="Ribosomal_uS19_bac-type"/>
</dbReference>
<dbReference type="InterPro" id="IPR020934">
    <property type="entry name" value="Ribosomal_uS19_CS"/>
</dbReference>
<dbReference type="InterPro" id="IPR023575">
    <property type="entry name" value="Ribosomal_uS19_SF"/>
</dbReference>
<dbReference type="NCBIfam" id="TIGR01050">
    <property type="entry name" value="rpsS_bact"/>
    <property type="match status" value="1"/>
</dbReference>
<dbReference type="PANTHER" id="PTHR11880">
    <property type="entry name" value="RIBOSOMAL PROTEIN S19P FAMILY MEMBER"/>
    <property type="match status" value="1"/>
</dbReference>
<dbReference type="PANTHER" id="PTHR11880:SF8">
    <property type="entry name" value="SMALL RIBOSOMAL SUBUNIT PROTEIN US19M"/>
    <property type="match status" value="1"/>
</dbReference>
<dbReference type="Pfam" id="PF00203">
    <property type="entry name" value="Ribosomal_S19"/>
    <property type="match status" value="1"/>
</dbReference>
<dbReference type="PIRSF" id="PIRSF002144">
    <property type="entry name" value="Ribosomal_S19"/>
    <property type="match status" value="1"/>
</dbReference>
<dbReference type="PRINTS" id="PR00975">
    <property type="entry name" value="RIBOSOMALS19"/>
</dbReference>
<dbReference type="SUPFAM" id="SSF54570">
    <property type="entry name" value="Ribosomal protein S19"/>
    <property type="match status" value="1"/>
</dbReference>
<dbReference type="PROSITE" id="PS00323">
    <property type="entry name" value="RIBOSOMAL_S19"/>
    <property type="match status" value="1"/>
</dbReference>
<evidence type="ECO:0000255" key="1">
    <source>
        <dbReference type="HAMAP-Rule" id="MF_00531"/>
    </source>
</evidence>
<evidence type="ECO:0000305" key="2"/>
<feature type="chain" id="PRO_0000265342" description="Small ribosomal subunit protein uS19">
    <location>
        <begin position="1"/>
        <end position="88"/>
    </location>
</feature>
<protein>
    <recommendedName>
        <fullName evidence="1">Small ribosomal subunit protein uS19</fullName>
    </recommendedName>
    <alternativeName>
        <fullName evidence="2">30S ribosomal protein S19</fullName>
    </alternativeName>
</protein>
<comment type="function">
    <text evidence="1">Protein S19 forms a complex with S13 that binds strongly to the 16S ribosomal RNA.</text>
</comment>
<comment type="similarity">
    <text evidence="1">Belongs to the universal ribosomal protein uS19 family.</text>
</comment>
<organism>
    <name type="scientific">Chlamydia trachomatis serovar A (strain ATCC VR-571B / DSM 19440 / HAR-13)</name>
    <dbReference type="NCBI Taxonomy" id="315277"/>
    <lineage>
        <taxon>Bacteria</taxon>
        <taxon>Pseudomonadati</taxon>
        <taxon>Chlamydiota</taxon>
        <taxon>Chlamydiia</taxon>
        <taxon>Chlamydiales</taxon>
        <taxon>Chlamydiaceae</taxon>
        <taxon>Chlamydia/Chlamydophila group</taxon>
        <taxon>Chlamydia</taxon>
    </lineage>
</organism>
<reference key="1">
    <citation type="journal article" date="2005" name="Infect. Immun.">
        <title>Comparative genomic analysis of Chlamydia trachomatis oculotropic and genitotropic strains.</title>
        <authorList>
            <person name="Carlson J.H."/>
            <person name="Porcella S.F."/>
            <person name="McClarty G."/>
            <person name="Caldwell H.D."/>
        </authorList>
    </citation>
    <scope>NUCLEOTIDE SEQUENCE [LARGE SCALE GENOMIC DNA]</scope>
    <source>
        <strain>ATCC VR-571B / DSM 19440 / HAR-13</strain>
    </source>
</reference>
<sequence length="88" mass="10233">MSRSLRKGPFVDHHLLKKVRDMNALEKKTPIKTWSRRSMITPEMIGHTFEVHNGRKFLTVFVSETMVGHKLGEFSPTRMFKSHPVKKG</sequence>
<accession>Q3KLH3</accession>
<proteinExistence type="inferred from homology"/>
<gene>
    <name evidence="1" type="primary">rpsS</name>
    <name type="ordered locus">CTA_0573</name>
</gene>